<dbReference type="EC" id="3.5.4.16" evidence="1"/>
<dbReference type="EMBL" id="CP000655">
    <property type="protein sequence ID" value="ABP34916.1"/>
    <property type="molecule type" value="Genomic_DNA"/>
</dbReference>
<dbReference type="RefSeq" id="WP_011903539.1">
    <property type="nucleotide sequence ID" value="NC_009379.1"/>
</dbReference>
<dbReference type="SMR" id="A4SZK2"/>
<dbReference type="GeneID" id="31482092"/>
<dbReference type="KEGG" id="pnu:Pnuc_1703"/>
<dbReference type="eggNOG" id="COG1469">
    <property type="taxonomic scope" value="Bacteria"/>
</dbReference>
<dbReference type="HOGENOM" id="CLU_062816_1_1_4"/>
<dbReference type="UniPathway" id="UPA00848">
    <property type="reaction ID" value="UER00151"/>
</dbReference>
<dbReference type="Proteomes" id="UP000000231">
    <property type="component" value="Chromosome"/>
</dbReference>
<dbReference type="GO" id="GO:0003934">
    <property type="term" value="F:GTP cyclohydrolase I activity"/>
    <property type="evidence" value="ECO:0007669"/>
    <property type="project" value="UniProtKB-UniRule"/>
</dbReference>
<dbReference type="GO" id="GO:0046654">
    <property type="term" value="P:tetrahydrofolate biosynthetic process"/>
    <property type="evidence" value="ECO:0007669"/>
    <property type="project" value="UniProtKB-UniRule"/>
</dbReference>
<dbReference type="Gene3D" id="3.10.270.10">
    <property type="entry name" value="Urate Oxidase"/>
    <property type="match status" value="1"/>
</dbReference>
<dbReference type="HAMAP" id="MF_01527_B">
    <property type="entry name" value="GTP_cyclohydrol_B"/>
    <property type="match status" value="1"/>
</dbReference>
<dbReference type="InterPro" id="IPR022838">
    <property type="entry name" value="GTP_cyclohydrolase_FolE2"/>
</dbReference>
<dbReference type="InterPro" id="IPR003801">
    <property type="entry name" value="GTP_cyclohydrolase_FolE2/MptA"/>
</dbReference>
<dbReference type="NCBIfam" id="NF010200">
    <property type="entry name" value="PRK13674.1-1"/>
    <property type="match status" value="1"/>
</dbReference>
<dbReference type="PANTHER" id="PTHR36445">
    <property type="entry name" value="GTP CYCLOHYDROLASE MPTA"/>
    <property type="match status" value="1"/>
</dbReference>
<dbReference type="PANTHER" id="PTHR36445:SF1">
    <property type="entry name" value="GTP CYCLOHYDROLASE MPTA"/>
    <property type="match status" value="1"/>
</dbReference>
<dbReference type="Pfam" id="PF02649">
    <property type="entry name" value="GCHY-1"/>
    <property type="match status" value="1"/>
</dbReference>
<comment type="function">
    <text evidence="1">Converts GTP to 7,8-dihydroneopterin triphosphate.</text>
</comment>
<comment type="catalytic activity">
    <reaction evidence="1">
        <text>GTP + H2O = 7,8-dihydroneopterin 3'-triphosphate + formate + H(+)</text>
        <dbReference type="Rhea" id="RHEA:17473"/>
        <dbReference type="ChEBI" id="CHEBI:15377"/>
        <dbReference type="ChEBI" id="CHEBI:15378"/>
        <dbReference type="ChEBI" id="CHEBI:15740"/>
        <dbReference type="ChEBI" id="CHEBI:37565"/>
        <dbReference type="ChEBI" id="CHEBI:58462"/>
        <dbReference type="EC" id="3.5.4.16"/>
    </reaction>
</comment>
<comment type="pathway">
    <text evidence="1">Cofactor biosynthesis; 7,8-dihydroneopterin triphosphate biosynthesis; 7,8-dihydroneopterin triphosphate from GTP: step 1/1.</text>
</comment>
<comment type="similarity">
    <text evidence="1">Belongs to the GTP cyclohydrolase IV family.</text>
</comment>
<keyword id="KW-0378">Hydrolase</keyword>
<keyword id="KW-1185">Reference proteome</keyword>
<reference key="1">
    <citation type="journal article" date="2012" name="Stand. Genomic Sci.">
        <title>Complete genome sequence of Polynucleobacter necessarius subsp. asymbioticus type strain (QLW-P1DMWA-1(T)).</title>
        <authorList>
            <person name="Meincke L."/>
            <person name="Copeland A."/>
            <person name="Lapidus A."/>
            <person name="Lucas S."/>
            <person name="Berry K.W."/>
            <person name="Del Rio T.G."/>
            <person name="Hammon N."/>
            <person name="Dalin E."/>
            <person name="Tice H."/>
            <person name="Pitluck S."/>
            <person name="Richardson P."/>
            <person name="Bruce D."/>
            <person name="Goodwin L."/>
            <person name="Han C."/>
            <person name="Tapia R."/>
            <person name="Detter J.C."/>
            <person name="Schmutz J."/>
            <person name="Brettin T."/>
            <person name="Larimer F."/>
            <person name="Land M."/>
            <person name="Hauser L."/>
            <person name="Kyrpides N.C."/>
            <person name="Ivanova N."/>
            <person name="Goker M."/>
            <person name="Woyke T."/>
            <person name="Wu Q.L."/>
            <person name="Pockl M."/>
            <person name="Hahn M.W."/>
            <person name="Klenk H.P."/>
        </authorList>
    </citation>
    <scope>NUCLEOTIDE SEQUENCE [LARGE SCALE GENOMIC DNA]</scope>
    <source>
        <strain>DSM 18221 / CIP 109841 / QLW-P1DMWA-1</strain>
    </source>
</reference>
<gene>
    <name evidence="1" type="primary">folE2</name>
    <name type="ordered locus">Pnuc_1703</name>
</gene>
<proteinExistence type="inferred from homology"/>
<sequence>MNPAFLKASAMPDVQSSRDERALPIEQVGIRGVRHPLMIRSNTGNFPSVGNFEMDVALPAHVKGTHMSRFMALLQKQDEAIDSTTVVALVRDMLPLLDAKEGHVQFTYTHFVKKAAPVSGVESLMDYEVTWMATAKQNDAGSVEVELGLRAQVPVMSLCPCSKEISEFGAHNQRSHVTMTVVLDTQTKMTVEDLVSAAEREASSELWGLLKRPDEKWVTERSYSNPKFVEDLVRDVAGRLKADTRIQSFVVDAENFESIHNHSAFARISHKK</sequence>
<organism>
    <name type="scientific">Polynucleobacter asymbioticus (strain DSM 18221 / CIP 109841 / QLW-P1DMWA-1)</name>
    <name type="common">Polynucleobacter necessarius subsp. asymbioticus</name>
    <dbReference type="NCBI Taxonomy" id="312153"/>
    <lineage>
        <taxon>Bacteria</taxon>
        <taxon>Pseudomonadati</taxon>
        <taxon>Pseudomonadota</taxon>
        <taxon>Betaproteobacteria</taxon>
        <taxon>Burkholderiales</taxon>
        <taxon>Burkholderiaceae</taxon>
        <taxon>Polynucleobacter</taxon>
    </lineage>
</organism>
<evidence type="ECO:0000255" key="1">
    <source>
        <dbReference type="HAMAP-Rule" id="MF_01527"/>
    </source>
</evidence>
<accession>A4SZK2</accession>
<protein>
    <recommendedName>
        <fullName evidence="1">GTP cyclohydrolase FolE2</fullName>
        <ecNumber evidence="1">3.5.4.16</ecNumber>
    </recommendedName>
</protein>
<feature type="chain" id="PRO_0000372033" description="GTP cyclohydrolase FolE2">
    <location>
        <begin position="1"/>
        <end position="272"/>
    </location>
</feature>
<feature type="site" description="May be catalytically important" evidence="1">
    <location>
        <position position="159"/>
    </location>
</feature>
<name>GCH4_POLAQ</name>